<keyword id="KW-0113">Calvin cycle</keyword>
<keyword id="KW-0120">Carbon dioxide fixation</keyword>
<keyword id="KW-0150">Chloroplast</keyword>
<keyword id="KW-0456">Lyase</keyword>
<keyword id="KW-0460">Magnesium</keyword>
<keyword id="KW-0479">Metal-binding</keyword>
<keyword id="KW-0503">Monooxygenase</keyword>
<keyword id="KW-0560">Oxidoreductase</keyword>
<keyword id="KW-0601">Photorespiration</keyword>
<keyword id="KW-0602">Photosynthesis</keyword>
<keyword id="KW-0934">Plastid</keyword>
<accession>Q6B8P0</accession>
<protein>
    <recommendedName>
        <fullName evidence="1">Ribulose bisphosphate carboxylase large chain</fullName>
        <shortName evidence="1">RuBisCO large subunit</shortName>
        <ecNumber evidence="1">4.1.1.39</ecNumber>
    </recommendedName>
</protein>
<dbReference type="EC" id="4.1.1.39" evidence="1"/>
<dbReference type="EMBL" id="AY673996">
    <property type="protein sequence ID" value="AAT79745.1"/>
    <property type="molecule type" value="Genomic_DNA"/>
</dbReference>
<dbReference type="RefSeq" id="YP_063670.1">
    <property type="nucleotide sequence ID" value="NC_006137.1"/>
</dbReference>
<dbReference type="SMR" id="Q6B8P0"/>
<dbReference type="GeneID" id="2944080"/>
<dbReference type="GO" id="GO:0009507">
    <property type="term" value="C:chloroplast"/>
    <property type="evidence" value="ECO:0007669"/>
    <property type="project" value="UniProtKB-SubCell"/>
</dbReference>
<dbReference type="GO" id="GO:0000287">
    <property type="term" value="F:magnesium ion binding"/>
    <property type="evidence" value="ECO:0007669"/>
    <property type="project" value="UniProtKB-UniRule"/>
</dbReference>
<dbReference type="GO" id="GO:0004497">
    <property type="term" value="F:monooxygenase activity"/>
    <property type="evidence" value="ECO:0007669"/>
    <property type="project" value="UniProtKB-KW"/>
</dbReference>
<dbReference type="GO" id="GO:0016984">
    <property type="term" value="F:ribulose-bisphosphate carboxylase activity"/>
    <property type="evidence" value="ECO:0007669"/>
    <property type="project" value="UniProtKB-UniRule"/>
</dbReference>
<dbReference type="GO" id="GO:0019253">
    <property type="term" value="P:reductive pentose-phosphate cycle"/>
    <property type="evidence" value="ECO:0007669"/>
    <property type="project" value="UniProtKB-UniRule"/>
</dbReference>
<dbReference type="CDD" id="cd08212">
    <property type="entry name" value="RuBisCO_large_I"/>
    <property type="match status" value="1"/>
</dbReference>
<dbReference type="Gene3D" id="3.20.20.110">
    <property type="entry name" value="Ribulose bisphosphate carboxylase, large subunit, C-terminal domain"/>
    <property type="match status" value="1"/>
</dbReference>
<dbReference type="Gene3D" id="3.30.70.150">
    <property type="entry name" value="RuBisCO large subunit, N-terminal domain"/>
    <property type="match status" value="1"/>
</dbReference>
<dbReference type="HAMAP" id="MF_01338">
    <property type="entry name" value="RuBisCO_L_type1"/>
    <property type="match status" value="1"/>
</dbReference>
<dbReference type="InterPro" id="IPR033966">
    <property type="entry name" value="RuBisCO"/>
</dbReference>
<dbReference type="InterPro" id="IPR020878">
    <property type="entry name" value="RuBisCo_large_chain_AS"/>
</dbReference>
<dbReference type="InterPro" id="IPR000685">
    <property type="entry name" value="RuBisCO_lsu_C"/>
</dbReference>
<dbReference type="InterPro" id="IPR036376">
    <property type="entry name" value="RuBisCO_lsu_C_sf"/>
</dbReference>
<dbReference type="InterPro" id="IPR017443">
    <property type="entry name" value="RuBisCO_lsu_fd_N"/>
</dbReference>
<dbReference type="InterPro" id="IPR036422">
    <property type="entry name" value="RuBisCO_lsu_N_sf"/>
</dbReference>
<dbReference type="InterPro" id="IPR020888">
    <property type="entry name" value="RuBisCO_lsuI"/>
</dbReference>
<dbReference type="NCBIfam" id="NF003252">
    <property type="entry name" value="PRK04208.1"/>
    <property type="match status" value="1"/>
</dbReference>
<dbReference type="PANTHER" id="PTHR42704">
    <property type="entry name" value="RIBULOSE BISPHOSPHATE CARBOXYLASE"/>
    <property type="match status" value="1"/>
</dbReference>
<dbReference type="PANTHER" id="PTHR42704:SF17">
    <property type="entry name" value="RIBULOSE BISPHOSPHATE CARBOXYLASE LARGE CHAIN"/>
    <property type="match status" value="1"/>
</dbReference>
<dbReference type="Pfam" id="PF00016">
    <property type="entry name" value="RuBisCO_large"/>
    <property type="match status" value="1"/>
</dbReference>
<dbReference type="Pfam" id="PF02788">
    <property type="entry name" value="RuBisCO_large_N"/>
    <property type="match status" value="1"/>
</dbReference>
<dbReference type="SFLD" id="SFLDG01052">
    <property type="entry name" value="RuBisCO"/>
    <property type="match status" value="1"/>
</dbReference>
<dbReference type="SFLD" id="SFLDS00014">
    <property type="entry name" value="RuBisCO"/>
    <property type="match status" value="1"/>
</dbReference>
<dbReference type="SFLD" id="SFLDG00301">
    <property type="entry name" value="RuBisCO-like_proteins"/>
    <property type="match status" value="1"/>
</dbReference>
<dbReference type="SUPFAM" id="SSF51649">
    <property type="entry name" value="RuBisCo, C-terminal domain"/>
    <property type="match status" value="1"/>
</dbReference>
<dbReference type="SUPFAM" id="SSF54966">
    <property type="entry name" value="RuBisCO, large subunit, small (N-terminal) domain"/>
    <property type="match status" value="1"/>
</dbReference>
<dbReference type="PROSITE" id="PS00157">
    <property type="entry name" value="RUBISCO_LARGE"/>
    <property type="match status" value="1"/>
</dbReference>
<reference key="1">
    <citation type="journal article" date="2004" name="J. Mol. Evol.">
        <title>Comparative analysis of the complete plastid genome sequence of the red alga Gracilaria tenuistipitata var. liui provides insights into the evolution of rhodoplasts and their relationship to other plastids.</title>
        <authorList>
            <person name="Hagopian J.C."/>
            <person name="Reis M."/>
            <person name="Kitajima J.P."/>
            <person name="Bhattacharya D."/>
            <person name="de Oliveira M.C."/>
        </authorList>
    </citation>
    <scope>NUCLEOTIDE SEQUENCE [LARGE SCALE GENOMIC DNA]</scope>
</reference>
<proteinExistence type="inferred from homology"/>
<sequence length="488" mass="54248">MSQSVEERTRIKNQRYESGVIPYAKMGYWDPNYVVKETDVLALFRVTPQPGVDPVEASAAVAGESSTATWTVVWTDLLTACDLYRAKAYKVDAVPNTTDQYFAFIAYDIDLFEEGSIANLTASIIGNVFGFKAVKALRLEDMRIPVAYLKTFQGPATGLIVERERMDKFGRPFLGATVKPKLGLSGKNYGRVVYEGLKGGLDFLKDDENINSQPFMRWKERFLYSMEAVNRAIAATGETKGHYMNVTAATMEEMYERAEFAKQLGSIIIMIDLVIGYTAIQTMAIWARKNDMILHLHRAGNSTYSRQKIHGMNFRVICKWMRMSGVDHIHAGTVVGKLEGDPLMIRGFYNTLLQTHLEVNLPQGIFFEQDWASLRKVTPVASGGIHCGQMHQLLDYLGNDVVLQFGGGTIGHPDGIQAGATANRVALEAMVLARNEGRDYVAEGPQILRDAAKTCGPLQTALDLWKDITFNYTSTDTADFVETPTANV</sequence>
<geneLocation type="chloroplast"/>
<evidence type="ECO:0000255" key="1">
    <source>
        <dbReference type="HAMAP-Rule" id="MF_01338"/>
    </source>
</evidence>
<feature type="chain" id="PRO_0000062484" description="Ribulose bisphosphate carboxylase large chain">
    <location>
        <begin position="1"/>
        <end position="488"/>
    </location>
</feature>
<feature type="active site" description="Proton acceptor" evidence="1">
    <location>
        <position position="179"/>
    </location>
</feature>
<feature type="active site" description="Proton acceptor" evidence="1">
    <location>
        <position position="297"/>
    </location>
</feature>
<feature type="binding site" description="in homodimeric partner" evidence="1">
    <location>
        <position position="127"/>
    </location>
    <ligand>
        <name>substrate</name>
    </ligand>
</feature>
<feature type="binding site" evidence="1">
    <location>
        <position position="177"/>
    </location>
    <ligand>
        <name>substrate</name>
    </ligand>
</feature>
<feature type="binding site" evidence="1">
    <location>
        <position position="181"/>
    </location>
    <ligand>
        <name>substrate</name>
    </ligand>
</feature>
<feature type="binding site" description="via carbamate group" evidence="1">
    <location>
        <position position="205"/>
    </location>
    <ligand>
        <name>Mg(2+)</name>
        <dbReference type="ChEBI" id="CHEBI:18420"/>
    </ligand>
</feature>
<feature type="binding site" evidence="1">
    <location>
        <position position="207"/>
    </location>
    <ligand>
        <name>Mg(2+)</name>
        <dbReference type="ChEBI" id="CHEBI:18420"/>
    </ligand>
</feature>
<feature type="binding site" evidence="1">
    <location>
        <position position="208"/>
    </location>
    <ligand>
        <name>Mg(2+)</name>
        <dbReference type="ChEBI" id="CHEBI:18420"/>
    </ligand>
</feature>
<feature type="binding site" evidence="1">
    <location>
        <position position="298"/>
    </location>
    <ligand>
        <name>substrate</name>
    </ligand>
</feature>
<feature type="binding site" evidence="1">
    <location>
        <position position="330"/>
    </location>
    <ligand>
        <name>substrate</name>
    </ligand>
</feature>
<feature type="binding site" evidence="1">
    <location>
        <position position="382"/>
    </location>
    <ligand>
        <name>substrate</name>
    </ligand>
</feature>
<feature type="site" description="Transition state stabilizer" evidence="1">
    <location>
        <position position="337"/>
    </location>
</feature>
<feature type="modified residue" description="N6-carboxylysine" evidence="1">
    <location>
        <position position="205"/>
    </location>
</feature>
<organism>
    <name type="scientific">Gracilaria tenuistipitata var. liui</name>
    <name type="common">Red alga</name>
    <dbReference type="NCBI Taxonomy" id="285951"/>
    <lineage>
        <taxon>Eukaryota</taxon>
        <taxon>Rhodophyta</taxon>
        <taxon>Florideophyceae</taxon>
        <taxon>Rhodymeniophycidae</taxon>
        <taxon>Gracilariales</taxon>
        <taxon>Gracilariaceae</taxon>
        <taxon>Gracilaria</taxon>
        <taxon>Gracilaria tenuistipitata</taxon>
    </lineage>
</organism>
<name>RBL_GRATL</name>
<gene>
    <name evidence="1" type="primary">rbcL</name>
    <name type="ordered locus">Grc000164</name>
</gene>
<comment type="function">
    <text evidence="1">RuBisCO catalyzes two reactions: the carboxylation of D-ribulose 1,5-bisphosphate, the primary event in carbon dioxide fixation, as well as the oxidative fragmentation of the pentose substrate in the photorespiration process. Both reactions occur simultaneously and in competition at the same active site.</text>
</comment>
<comment type="catalytic activity">
    <reaction evidence="1">
        <text>2 (2R)-3-phosphoglycerate + 2 H(+) = D-ribulose 1,5-bisphosphate + CO2 + H2O</text>
        <dbReference type="Rhea" id="RHEA:23124"/>
        <dbReference type="ChEBI" id="CHEBI:15377"/>
        <dbReference type="ChEBI" id="CHEBI:15378"/>
        <dbReference type="ChEBI" id="CHEBI:16526"/>
        <dbReference type="ChEBI" id="CHEBI:57870"/>
        <dbReference type="ChEBI" id="CHEBI:58272"/>
        <dbReference type="EC" id="4.1.1.39"/>
    </reaction>
</comment>
<comment type="catalytic activity">
    <reaction evidence="1">
        <text>D-ribulose 1,5-bisphosphate + O2 = 2-phosphoglycolate + (2R)-3-phosphoglycerate + 2 H(+)</text>
        <dbReference type="Rhea" id="RHEA:36631"/>
        <dbReference type="ChEBI" id="CHEBI:15378"/>
        <dbReference type="ChEBI" id="CHEBI:15379"/>
        <dbReference type="ChEBI" id="CHEBI:57870"/>
        <dbReference type="ChEBI" id="CHEBI:58033"/>
        <dbReference type="ChEBI" id="CHEBI:58272"/>
    </reaction>
</comment>
<comment type="cofactor">
    <cofactor evidence="1">
        <name>Mg(2+)</name>
        <dbReference type="ChEBI" id="CHEBI:18420"/>
    </cofactor>
    <text evidence="1">Binds 1 Mg(2+) ion per subunit.</text>
</comment>
<comment type="subunit">
    <text evidence="1">Heterohexadecamer of 8 large chains and 8 small chains.</text>
</comment>
<comment type="subcellular location">
    <subcellularLocation>
        <location>Plastid</location>
        <location>Chloroplast</location>
    </subcellularLocation>
</comment>
<comment type="miscellaneous">
    <text evidence="1">The basic functional RuBisCO is composed of a large chain homodimer in a 'head-to-tail' conformation. In form I RuBisCO this homodimer is arranged in a barrel-like tetramer with the small subunits forming a tetrameric 'cap' on each end of the 'barrel'.</text>
</comment>
<comment type="similarity">
    <text evidence="1">Belongs to the RuBisCO large chain family. Type I subfamily.</text>
</comment>